<name>Y2446_YERPG</name>
<evidence type="ECO:0000255" key="1">
    <source>
        <dbReference type="HAMAP-Rule" id="MF_01561"/>
    </source>
</evidence>
<accession>A9QYZ5</accession>
<reference key="1">
    <citation type="journal article" date="2010" name="J. Bacteriol.">
        <title>Genome sequence of the deep-rooted Yersinia pestis strain Angola reveals new insights into the evolution and pangenome of the plague bacterium.</title>
        <authorList>
            <person name="Eppinger M."/>
            <person name="Worsham P.L."/>
            <person name="Nikolich M.P."/>
            <person name="Riley D.R."/>
            <person name="Sebastian Y."/>
            <person name="Mou S."/>
            <person name="Achtman M."/>
            <person name="Lindler L.E."/>
            <person name="Ravel J."/>
        </authorList>
    </citation>
    <scope>NUCLEOTIDE SEQUENCE [LARGE SCALE GENOMIC DNA]</scope>
    <source>
        <strain>Angola</strain>
    </source>
</reference>
<keyword id="KW-0378">Hydrolase</keyword>
<keyword id="KW-0479">Metal-binding</keyword>
<keyword id="KW-0862">Zinc</keyword>
<gene>
    <name type="ordered locus">YpAngola_A2446</name>
</gene>
<dbReference type="EC" id="3.1.3.-" evidence="1"/>
<dbReference type="EMBL" id="CP000901">
    <property type="protein sequence ID" value="ABX88124.1"/>
    <property type="molecule type" value="Genomic_DNA"/>
</dbReference>
<dbReference type="RefSeq" id="WP_012229690.1">
    <property type="nucleotide sequence ID" value="NC_010159.1"/>
</dbReference>
<dbReference type="SMR" id="A9QYZ5"/>
<dbReference type="KEGG" id="ypg:YpAngola_A2446"/>
<dbReference type="PATRIC" id="fig|349746.12.peg.3465"/>
<dbReference type="GO" id="GO:0005829">
    <property type="term" value="C:cytosol"/>
    <property type="evidence" value="ECO:0007669"/>
    <property type="project" value="TreeGrafter"/>
</dbReference>
<dbReference type="GO" id="GO:0016791">
    <property type="term" value="F:phosphatase activity"/>
    <property type="evidence" value="ECO:0007669"/>
    <property type="project" value="UniProtKB-UniRule"/>
</dbReference>
<dbReference type="GO" id="GO:0008270">
    <property type="term" value="F:zinc ion binding"/>
    <property type="evidence" value="ECO:0007669"/>
    <property type="project" value="UniProtKB-UniRule"/>
</dbReference>
<dbReference type="GO" id="GO:0071978">
    <property type="term" value="P:bacterial-type flagellum-dependent swarming motility"/>
    <property type="evidence" value="ECO:0007669"/>
    <property type="project" value="TreeGrafter"/>
</dbReference>
<dbReference type="CDD" id="cd07437">
    <property type="entry name" value="PHP_HisPPase_Ycdx_like"/>
    <property type="match status" value="1"/>
</dbReference>
<dbReference type="FunFam" id="3.20.20.140:FF:000008">
    <property type="entry name" value="Probable phosphatase YcdX"/>
    <property type="match status" value="1"/>
</dbReference>
<dbReference type="Gene3D" id="3.20.20.140">
    <property type="entry name" value="Metal-dependent hydrolases"/>
    <property type="match status" value="1"/>
</dbReference>
<dbReference type="HAMAP" id="MF_01561">
    <property type="entry name" value="YcdX_phosphat"/>
    <property type="match status" value="1"/>
</dbReference>
<dbReference type="InterPro" id="IPR023710">
    <property type="entry name" value="Phosphatase_YcdX_put"/>
</dbReference>
<dbReference type="InterPro" id="IPR004013">
    <property type="entry name" value="PHP_dom"/>
</dbReference>
<dbReference type="InterPro" id="IPR050243">
    <property type="entry name" value="PHP_phosphatase"/>
</dbReference>
<dbReference type="InterPro" id="IPR003141">
    <property type="entry name" value="Pol/His_phosphatase_N"/>
</dbReference>
<dbReference type="InterPro" id="IPR016195">
    <property type="entry name" value="Pol/histidinol_Pase-like"/>
</dbReference>
<dbReference type="NCBIfam" id="NF006702">
    <property type="entry name" value="PRK09248.1"/>
    <property type="match status" value="1"/>
</dbReference>
<dbReference type="PANTHER" id="PTHR36928">
    <property type="entry name" value="PHOSPHATASE YCDX-RELATED"/>
    <property type="match status" value="1"/>
</dbReference>
<dbReference type="PANTHER" id="PTHR36928:SF1">
    <property type="entry name" value="PHOSPHATASE YCDX-RELATED"/>
    <property type="match status" value="1"/>
</dbReference>
<dbReference type="Pfam" id="PF02811">
    <property type="entry name" value="PHP"/>
    <property type="match status" value="1"/>
</dbReference>
<dbReference type="SMART" id="SM00481">
    <property type="entry name" value="POLIIIAc"/>
    <property type="match status" value="1"/>
</dbReference>
<dbReference type="SUPFAM" id="SSF89550">
    <property type="entry name" value="PHP domain-like"/>
    <property type="match status" value="1"/>
</dbReference>
<comment type="cofactor">
    <cofactor evidence="1">
        <name>Zn(2+)</name>
        <dbReference type="ChEBI" id="CHEBI:29105"/>
    </cofactor>
    <text evidence="1">Binds 3 Zn(2+) ions per subunit.</text>
</comment>
<comment type="subunit">
    <text evidence="1">Homotrimer.</text>
</comment>
<comment type="similarity">
    <text evidence="1">Belongs to the PHP family.</text>
</comment>
<organism>
    <name type="scientific">Yersinia pestis bv. Antiqua (strain Angola)</name>
    <dbReference type="NCBI Taxonomy" id="349746"/>
    <lineage>
        <taxon>Bacteria</taxon>
        <taxon>Pseudomonadati</taxon>
        <taxon>Pseudomonadota</taxon>
        <taxon>Gammaproteobacteria</taxon>
        <taxon>Enterobacterales</taxon>
        <taxon>Yersiniaceae</taxon>
        <taxon>Yersinia</taxon>
    </lineage>
</organism>
<proteinExistence type="inferred from homology"/>
<sequence length="245" mass="26958">MYPVDLHMHTVASTHAYSTLHDYIAEAKLKNIKLFAITDHGPDMADAPHYWHFMNMRVWPRLVDGVGILRGIEANIKNLDGDIDCTGPMLDAVDLLIAGFHEPVFPPQDKAANTQAMIATMAQGNVHIISHPGNPKYPVDIPAIAQAAAKYNVALELNNSSFAHSRKGSEANCRAIAAAVRDAGGWLALGSDSHIAYALGIFEHCERIIAEVNFPQERILNVSPRRLLDYLEQRGRPVIPELAEL</sequence>
<protein>
    <recommendedName>
        <fullName evidence="1">Probable phosphatase YpAngola_A2446</fullName>
        <ecNumber evidence="1">3.1.3.-</ecNumber>
    </recommendedName>
</protein>
<feature type="chain" id="PRO_1000147151" description="Probable phosphatase YpAngola_A2446">
    <location>
        <begin position="1"/>
        <end position="245"/>
    </location>
</feature>
<feature type="binding site" evidence="1">
    <location>
        <position position="7"/>
    </location>
    <ligand>
        <name>Zn(2+)</name>
        <dbReference type="ChEBI" id="CHEBI:29105"/>
        <label>1</label>
    </ligand>
</feature>
<feature type="binding site" evidence="1">
    <location>
        <position position="9"/>
    </location>
    <ligand>
        <name>Zn(2+)</name>
        <dbReference type="ChEBI" id="CHEBI:29105"/>
        <label>1</label>
    </ligand>
</feature>
<feature type="binding site" evidence="1">
    <location>
        <position position="15"/>
    </location>
    <ligand>
        <name>Zn(2+)</name>
        <dbReference type="ChEBI" id="CHEBI:29105"/>
        <label>2</label>
    </ligand>
</feature>
<feature type="binding site" evidence="1">
    <location>
        <position position="40"/>
    </location>
    <ligand>
        <name>Zn(2+)</name>
        <dbReference type="ChEBI" id="CHEBI:29105"/>
        <label>2</label>
    </ligand>
</feature>
<feature type="binding site" evidence="1">
    <location>
        <position position="73"/>
    </location>
    <ligand>
        <name>Zn(2+)</name>
        <dbReference type="ChEBI" id="CHEBI:29105"/>
        <label>1</label>
    </ligand>
</feature>
<feature type="binding site" evidence="1">
    <location>
        <position position="73"/>
    </location>
    <ligand>
        <name>Zn(2+)</name>
        <dbReference type="ChEBI" id="CHEBI:29105"/>
        <label>3</label>
    </ligand>
</feature>
<feature type="binding site" evidence="1">
    <location>
        <position position="101"/>
    </location>
    <ligand>
        <name>Zn(2+)</name>
        <dbReference type="ChEBI" id="CHEBI:29105"/>
        <label>3</label>
    </ligand>
</feature>
<feature type="binding site" evidence="1">
    <location>
        <position position="131"/>
    </location>
    <ligand>
        <name>Zn(2+)</name>
        <dbReference type="ChEBI" id="CHEBI:29105"/>
        <label>3</label>
    </ligand>
</feature>
<feature type="binding site" evidence="1">
    <location>
        <position position="192"/>
    </location>
    <ligand>
        <name>Zn(2+)</name>
        <dbReference type="ChEBI" id="CHEBI:29105"/>
        <label>1</label>
    </ligand>
</feature>
<feature type="binding site" evidence="1">
    <location>
        <position position="194"/>
    </location>
    <ligand>
        <name>Zn(2+)</name>
        <dbReference type="ChEBI" id="CHEBI:29105"/>
        <label>2</label>
    </ligand>
</feature>